<protein>
    <recommendedName>
        <fullName evidence="1">Coenzyme PQQ synthesis protein B</fullName>
    </recommendedName>
    <alternativeName>
        <fullName evidence="1">Pyrroloquinoline quinone biosynthesis protein B</fullName>
    </alternativeName>
</protein>
<accession>Q3J7X3</accession>
<dbReference type="EMBL" id="CP000127">
    <property type="protein sequence ID" value="ABA59073.1"/>
    <property type="molecule type" value="Genomic_DNA"/>
</dbReference>
<dbReference type="RefSeq" id="WP_002814312.1">
    <property type="nucleotide sequence ID" value="NC_007484.1"/>
</dbReference>
<dbReference type="SMR" id="Q3J7X3"/>
<dbReference type="STRING" id="323261.Noc_2620"/>
<dbReference type="KEGG" id="noc:Noc_2620"/>
<dbReference type="eggNOG" id="COG1235">
    <property type="taxonomic scope" value="Bacteria"/>
</dbReference>
<dbReference type="HOGENOM" id="CLU_061120_0_0_6"/>
<dbReference type="InParanoid" id="Q3J7X3"/>
<dbReference type="UniPathway" id="UPA00539"/>
<dbReference type="Proteomes" id="UP000006838">
    <property type="component" value="Chromosome"/>
</dbReference>
<dbReference type="GO" id="GO:0018189">
    <property type="term" value="P:pyrroloquinoline quinone biosynthetic process"/>
    <property type="evidence" value="ECO:0007669"/>
    <property type="project" value="UniProtKB-UniRule"/>
</dbReference>
<dbReference type="CDD" id="cd16274">
    <property type="entry name" value="PQQB-like_MBL-fold"/>
    <property type="match status" value="1"/>
</dbReference>
<dbReference type="Gene3D" id="3.60.15.10">
    <property type="entry name" value="Ribonuclease Z/Hydroxyacylglutathione hydrolase-like"/>
    <property type="match status" value="1"/>
</dbReference>
<dbReference type="HAMAP" id="MF_00653">
    <property type="entry name" value="PQQ_syn_PqqB"/>
    <property type="match status" value="1"/>
</dbReference>
<dbReference type="InterPro" id="IPR001279">
    <property type="entry name" value="Metallo-B-lactamas"/>
</dbReference>
<dbReference type="InterPro" id="IPR011842">
    <property type="entry name" value="PQQ_synth_PqqB"/>
</dbReference>
<dbReference type="InterPro" id="IPR036866">
    <property type="entry name" value="RibonucZ/Hydroxyglut_hydro"/>
</dbReference>
<dbReference type="NCBIfam" id="TIGR02108">
    <property type="entry name" value="PQQ_syn_pqqB"/>
    <property type="match status" value="1"/>
</dbReference>
<dbReference type="PANTHER" id="PTHR42663:SF7">
    <property type="entry name" value="COENZYME PQQ SYNTHESIS PROTEIN B"/>
    <property type="match status" value="1"/>
</dbReference>
<dbReference type="PANTHER" id="PTHR42663">
    <property type="entry name" value="HYDROLASE C777.06C-RELATED-RELATED"/>
    <property type="match status" value="1"/>
</dbReference>
<dbReference type="Pfam" id="PF12706">
    <property type="entry name" value="Lactamase_B_2"/>
    <property type="match status" value="1"/>
</dbReference>
<dbReference type="SUPFAM" id="SSF56281">
    <property type="entry name" value="Metallo-hydrolase/oxidoreductase"/>
    <property type="match status" value="1"/>
</dbReference>
<sequence>MLIHVLGSGAGGGFPQWNCNCHNCNRLRKGNFKGQARTQSSIAASTNGTDWVLFNASPDILGQLQHFPAIQPGRALRDTGIRGIVLLDSQIDHTTGLLMLREHHRPLDVYCTESVHQDLTTGNPLFKVLEHYCTVNWHPLQLPQGDAPGEGFQVEGIEGLRLTPVPLRSEAPPYSPHRHNYHVGDTIGLWLEDPATQKSLFYAPGLGQIEDHVLSLMEKADCLLIDGTFWTEDEMERAGITQKRATEMGHLPQSGQGGMISVLAPLTSPWKILIHINNTNPILDEESLERAQLEAAGIEVAFDGMDIIL</sequence>
<feature type="chain" id="PRO_1000061650" description="Coenzyme PQQ synthesis protein B">
    <location>
        <begin position="1"/>
        <end position="309"/>
    </location>
</feature>
<comment type="function">
    <text evidence="1">May be involved in the transport of PQQ or its precursor to the periplasm.</text>
</comment>
<comment type="pathway">
    <text evidence="1">Cofactor biosynthesis; pyrroloquinoline quinone biosynthesis.</text>
</comment>
<comment type="similarity">
    <text evidence="1">Belongs to the PqqB family.</text>
</comment>
<reference key="1">
    <citation type="journal article" date="2006" name="Appl. Environ. Microbiol.">
        <title>Complete genome sequence of the marine, chemolithoautotrophic, ammonia-oxidizing bacterium Nitrosococcus oceani ATCC 19707.</title>
        <authorList>
            <person name="Klotz M.G."/>
            <person name="Arp D.J."/>
            <person name="Chain P.S.G."/>
            <person name="El-Sheikh A.F."/>
            <person name="Hauser L.J."/>
            <person name="Hommes N.G."/>
            <person name="Larimer F.W."/>
            <person name="Malfatti S.A."/>
            <person name="Norton J.M."/>
            <person name="Poret-Peterson A.T."/>
            <person name="Vergez L.M."/>
            <person name="Ward B.B."/>
        </authorList>
    </citation>
    <scope>NUCLEOTIDE SEQUENCE [LARGE SCALE GENOMIC DNA]</scope>
    <source>
        <strain>ATCC 19707 / BCRC 17464 / JCM 30415 / NCIMB 11848 / C-107</strain>
    </source>
</reference>
<keyword id="KW-0884">PQQ biosynthesis</keyword>
<keyword id="KW-1185">Reference proteome</keyword>
<keyword id="KW-0813">Transport</keyword>
<organism>
    <name type="scientific">Nitrosococcus oceani (strain ATCC 19707 / BCRC 17464 / JCM 30415 / NCIMB 11848 / C-107)</name>
    <dbReference type="NCBI Taxonomy" id="323261"/>
    <lineage>
        <taxon>Bacteria</taxon>
        <taxon>Pseudomonadati</taxon>
        <taxon>Pseudomonadota</taxon>
        <taxon>Gammaproteobacteria</taxon>
        <taxon>Chromatiales</taxon>
        <taxon>Chromatiaceae</taxon>
        <taxon>Nitrosococcus</taxon>
    </lineage>
</organism>
<name>PQQB_NITOC</name>
<gene>
    <name evidence="1" type="primary">pqqB</name>
    <name type="ordered locus">Noc_2620</name>
</gene>
<evidence type="ECO:0000255" key="1">
    <source>
        <dbReference type="HAMAP-Rule" id="MF_00653"/>
    </source>
</evidence>
<proteinExistence type="inferred from homology"/>